<protein>
    <recommendedName>
        <fullName evidence="1">Large ribosomal subunit protein uL15</fullName>
    </recommendedName>
    <alternativeName>
        <fullName evidence="3">50S ribosomal protein L15</fullName>
    </alternativeName>
</protein>
<reference key="1">
    <citation type="journal article" date="2006" name="Science">
        <title>Genomic islands and the ecology and evolution of Prochlorococcus.</title>
        <authorList>
            <person name="Coleman M.L."/>
            <person name="Sullivan M.B."/>
            <person name="Martiny A.C."/>
            <person name="Steglich C."/>
            <person name="Barry K."/>
            <person name="Delong E.F."/>
            <person name="Chisholm S.W."/>
        </authorList>
    </citation>
    <scope>NUCLEOTIDE SEQUENCE [LARGE SCALE GENOMIC DNA]</scope>
    <source>
        <strain>MIT 9312</strain>
    </source>
</reference>
<dbReference type="EMBL" id="CP000111">
    <property type="protein sequence ID" value="ABB50694.1"/>
    <property type="molecule type" value="Genomic_DNA"/>
</dbReference>
<dbReference type="RefSeq" id="WP_011377176.1">
    <property type="nucleotide sequence ID" value="NC_007577.1"/>
</dbReference>
<dbReference type="SMR" id="Q318K1"/>
<dbReference type="STRING" id="74546.PMT9312_1633"/>
<dbReference type="KEGG" id="pmi:PMT9312_1633"/>
<dbReference type="eggNOG" id="COG0200">
    <property type="taxonomic scope" value="Bacteria"/>
</dbReference>
<dbReference type="HOGENOM" id="CLU_055188_4_1_3"/>
<dbReference type="OrthoDB" id="9810293at2"/>
<dbReference type="Proteomes" id="UP000002715">
    <property type="component" value="Chromosome"/>
</dbReference>
<dbReference type="GO" id="GO:0022625">
    <property type="term" value="C:cytosolic large ribosomal subunit"/>
    <property type="evidence" value="ECO:0007669"/>
    <property type="project" value="TreeGrafter"/>
</dbReference>
<dbReference type="GO" id="GO:0019843">
    <property type="term" value="F:rRNA binding"/>
    <property type="evidence" value="ECO:0007669"/>
    <property type="project" value="UniProtKB-UniRule"/>
</dbReference>
<dbReference type="GO" id="GO:0003735">
    <property type="term" value="F:structural constituent of ribosome"/>
    <property type="evidence" value="ECO:0007669"/>
    <property type="project" value="InterPro"/>
</dbReference>
<dbReference type="GO" id="GO:0006412">
    <property type="term" value="P:translation"/>
    <property type="evidence" value="ECO:0007669"/>
    <property type="project" value="UniProtKB-UniRule"/>
</dbReference>
<dbReference type="Gene3D" id="3.100.10.10">
    <property type="match status" value="1"/>
</dbReference>
<dbReference type="HAMAP" id="MF_01341">
    <property type="entry name" value="Ribosomal_uL15"/>
    <property type="match status" value="1"/>
</dbReference>
<dbReference type="InterPro" id="IPR030878">
    <property type="entry name" value="Ribosomal_uL15"/>
</dbReference>
<dbReference type="InterPro" id="IPR021131">
    <property type="entry name" value="Ribosomal_uL15/eL18"/>
</dbReference>
<dbReference type="InterPro" id="IPR036227">
    <property type="entry name" value="Ribosomal_uL15/eL18_sf"/>
</dbReference>
<dbReference type="InterPro" id="IPR005749">
    <property type="entry name" value="Ribosomal_uL15_bac-type"/>
</dbReference>
<dbReference type="InterPro" id="IPR001196">
    <property type="entry name" value="Ribosomal_uL15_CS"/>
</dbReference>
<dbReference type="NCBIfam" id="TIGR01071">
    <property type="entry name" value="rplO_bact"/>
    <property type="match status" value="1"/>
</dbReference>
<dbReference type="PANTHER" id="PTHR12934">
    <property type="entry name" value="50S RIBOSOMAL PROTEIN L15"/>
    <property type="match status" value="1"/>
</dbReference>
<dbReference type="PANTHER" id="PTHR12934:SF11">
    <property type="entry name" value="LARGE RIBOSOMAL SUBUNIT PROTEIN UL15M"/>
    <property type="match status" value="1"/>
</dbReference>
<dbReference type="Pfam" id="PF00828">
    <property type="entry name" value="Ribosomal_L27A"/>
    <property type="match status" value="1"/>
</dbReference>
<dbReference type="SUPFAM" id="SSF52080">
    <property type="entry name" value="Ribosomal proteins L15p and L18e"/>
    <property type="match status" value="1"/>
</dbReference>
<dbReference type="PROSITE" id="PS00475">
    <property type="entry name" value="RIBOSOMAL_L15"/>
    <property type="match status" value="1"/>
</dbReference>
<comment type="function">
    <text evidence="1">Binds to the 23S rRNA.</text>
</comment>
<comment type="subunit">
    <text evidence="1">Part of the 50S ribosomal subunit.</text>
</comment>
<comment type="similarity">
    <text evidence="1">Belongs to the universal ribosomal protein uL15 family.</text>
</comment>
<keyword id="KW-0687">Ribonucleoprotein</keyword>
<keyword id="KW-0689">Ribosomal protein</keyword>
<keyword id="KW-0694">RNA-binding</keyword>
<keyword id="KW-0699">rRNA-binding</keyword>
<gene>
    <name evidence="1" type="primary">rplO1</name>
    <name type="ordered locus">PMT9312_1633</name>
</gene>
<accession>Q318K1</accession>
<organism>
    <name type="scientific">Prochlorococcus marinus (strain MIT 9312)</name>
    <dbReference type="NCBI Taxonomy" id="74546"/>
    <lineage>
        <taxon>Bacteria</taxon>
        <taxon>Bacillati</taxon>
        <taxon>Cyanobacteriota</taxon>
        <taxon>Cyanophyceae</taxon>
        <taxon>Synechococcales</taxon>
        <taxon>Prochlorococcaceae</taxon>
        <taxon>Prochlorococcus</taxon>
    </lineage>
</organism>
<evidence type="ECO:0000255" key="1">
    <source>
        <dbReference type="HAMAP-Rule" id="MF_01341"/>
    </source>
</evidence>
<evidence type="ECO:0000256" key="2">
    <source>
        <dbReference type="SAM" id="MobiDB-lite"/>
    </source>
</evidence>
<evidence type="ECO:0000305" key="3"/>
<feature type="chain" id="PRO_0000251539" description="Large ribosomal subunit protein uL15">
    <location>
        <begin position="1"/>
        <end position="152"/>
    </location>
</feature>
<feature type="region of interest" description="Disordered" evidence="2">
    <location>
        <begin position="1"/>
        <end position="57"/>
    </location>
</feature>
<feature type="compositionally biased region" description="Basic residues" evidence="2">
    <location>
        <begin position="14"/>
        <end position="23"/>
    </location>
</feature>
<feature type="compositionally biased region" description="Gly residues" evidence="2">
    <location>
        <begin position="25"/>
        <end position="37"/>
    </location>
</feature>
<sequence>MTSTLNTLKSNSGSRKKKLRKGRGIAAGQGASCGFGMRGQKSRSGRPTRPGFEGGQMPLYRRVPKLKHFEIINQKNFSIINLDKLKDFNDNDTVNLDSLVKKGLIFKPKFPLKILGNGKVNVKLTVQAHAFTKVAKQKIEDAGGSCELLNNK</sequence>
<name>RL15_PROM9</name>
<proteinExistence type="inferred from homology"/>